<protein>
    <recommendedName>
        <fullName>Foldase protein PrsA</fullName>
        <ecNumber>5.2.1.8</ecNumber>
    </recommendedName>
</protein>
<organism>
    <name type="scientific">Bacillus subtilis (strain 168)</name>
    <dbReference type="NCBI Taxonomy" id="224308"/>
    <lineage>
        <taxon>Bacteria</taxon>
        <taxon>Bacillati</taxon>
        <taxon>Bacillota</taxon>
        <taxon>Bacilli</taxon>
        <taxon>Bacillales</taxon>
        <taxon>Bacillaceae</taxon>
        <taxon>Bacillus</taxon>
    </lineage>
</organism>
<dbReference type="EC" id="5.2.1.8"/>
<dbReference type="EMBL" id="X57271">
    <property type="protein sequence ID" value="CAA40543.1"/>
    <property type="molecule type" value="Genomic_DNA"/>
</dbReference>
<dbReference type="EMBL" id="Y14077">
    <property type="protein sequence ID" value="CAA74418.1"/>
    <property type="molecule type" value="Genomic_DNA"/>
</dbReference>
<dbReference type="EMBL" id="AL009126">
    <property type="protein sequence ID" value="CAB12835.1"/>
    <property type="molecule type" value="Genomic_DNA"/>
</dbReference>
<dbReference type="EMBL" id="M22909">
    <property type="protein sequence ID" value="AAA22825.1"/>
    <property type="status" value="ALT_SEQ"/>
    <property type="molecule type" value="Genomic_DNA"/>
</dbReference>
<dbReference type="PIR" id="S15269">
    <property type="entry name" value="S15269"/>
</dbReference>
<dbReference type="RefSeq" id="NP_388876.1">
    <property type="nucleotide sequence ID" value="NC_000964.3"/>
</dbReference>
<dbReference type="RefSeq" id="WP_003245079.1">
    <property type="nucleotide sequence ID" value="NZ_OZ025638.1"/>
</dbReference>
<dbReference type="PDB" id="1ZK6">
    <property type="method" value="NMR"/>
    <property type="chains" value="A=135-225"/>
</dbReference>
<dbReference type="PDB" id="4WO7">
    <property type="method" value="X-ray"/>
    <property type="resolution" value="2.63 A"/>
    <property type="chains" value="A/B=21-280"/>
</dbReference>
<dbReference type="PDBsum" id="1ZK6"/>
<dbReference type="PDBsum" id="4WO7"/>
<dbReference type="SMR" id="P24327"/>
<dbReference type="FunCoup" id="P24327">
    <property type="interactions" value="68"/>
</dbReference>
<dbReference type="IntAct" id="P24327">
    <property type="interactions" value="3"/>
</dbReference>
<dbReference type="MINT" id="P24327"/>
<dbReference type="STRING" id="224308.BSU09950"/>
<dbReference type="MEROPS" id="M67.A10"/>
<dbReference type="jPOST" id="P24327"/>
<dbReference type="PaxDb" id="224308-BSU09950"/>
<dbReference type="EnsemblBacteria" id="CAB12835">
    <property type="protein sequence ID" value="CAB12835"/>
    <property type="gene ID" value="BSU_09950"/>
</dbReference>
<dbReference type="GeneID" id="939294"/>
<dbReference type="KEGG" id="bsu:BSU09950"/>
<dbReference type="PATRIC" id="fig|224308.179.peg.1068"/>
<dbReference type="eggNOG" id="COG0760">
    <property type="taxonomic scope" value="Bacteria"/>
</dbReference>
<dbReference type="InParanoid" id="P24327"/>
<dbReference type="OrthoDB" id="14196at2"/>
<dbReference type="PhylomeDB" id="P24327"/>
<dbReference type="BioCyc" id="BSUB:BSU09950-MONOMER"/>
<dbReference type="EvolutionaryTrace" id="P24327"/>
<dbReference type="Proteomes" id="UP000001570">
    <property type="component" value="Chromosome"/>
</dbReference>
<dbReference type="GO" id="GO:0045121">
    <property type="term" value="C:membrane raft"/>
    <property type="evidence" value="ECO:0007669"/>
    <property type="project" value="UniProtKB-SubCell"/>
</dbReference>
<dbReference type="GO" id="GO:0005886">
    <property type="term" value="C:plasma membrane"/>
    <property type="evidence" value="ECO:0007669"/>
    <property type="project" value="UniProtKB-SubCell"/>
</dbReference>
<dbReference type="GO" id="GO:0003755">
    <property type="term" value="F:peptidyl-prolyl cis-trans isomerase activity"/>
    <property type="evidence" value="ECO:0007669"/>
    <property type="project" value="UniProtKB-UniRule"/>
</dbReference>
<dbReference type="GO" id="GO:0006457">
    <property type="term" value="P:protein folding"/>
    <property type="evidence" value="ECO:0007669"/>
    <property type="project" value="UniProtKB-UniRule"/>
</dbReference>
<dbReference type="GO" id="GO:0015031">
    <property type="term" value="P:protein transport"/>
    <property type="evidence" value="ECO:0007669"/>
    <property type="project" value="InterPro"/>
</dbReference>
<dbReference type="Gene3D" id="3.10.50.40">
    <property type="match status" value="1"/>
</dbReference>
<dbReference type="Gene3D" id="1.10.3120.10">
    <property type="entry name" value="Trigger factor, C-terminal domain"/>
    <property type="match status" value="1"/>
</dbReference>
<dbReference type="HAMAP" id="MF_01145">
    <property type="entry name" value="Foldase_PrsA"/>
    <property type="match status" value="1"/>
</dbReference>
<dbReference type="InterPro" id="IPR023059">
    <property type="entry name" value="Foldase_PrsA"/>
</dbReference>
<dbReference type="InterPro" id="IPR046357">
    <property type="entry name" value="PPIase_dom_sf"/>
</dbReference>
<dbReference type="InterPro" id="IPR000297">
    <property type="entry name" value="PPIase_PpiC"/>
</dbReference>
<dbReference type="InterPro" id="IPR023058">
    <property type="entry name" value="PPIase_PpiC_CS"/>
</dbReference>
<dbReference type="InterPro" id="IPR050245">
    <property type="entry name" value="PrsA_foldase"/>
</dbReference>
<dbReference type="InterPro" id="IPR037041">
    <property type="entry name" value="Trigger_fac_C_sf"/>
</dbReference>
<dbReference type="InterPro" id="IPR027304">
    <property type="entry name" value="Trigger_fact/SurA_dom_sf"/>
</dbReference>
<dbReference type="PANTHER" id="PTHR47245:SF1">
    <property type="entry name" value="FOLDASE PROTEIN PRSA"/>
    <property type="match status" value="1"/>
</dbReference>
<dbReference type="PANTHER" id="PTHR47245">
    <property type="entry name" value="PEPTIDYLPROLYL ISOMERASE"/>
    <property type="match status" value="1"/>
</dbReference>
<dbReference type="Pfam" id="PF13616">
    <property type="entry name" value="Rotamase_3"/>
    <property type="match status" value="1"/>
</dbReference>
<dbReference type="SUPFAM" id="SSF54534">
    <property type="entry name" value="FKBP-like"/>
    <property type="match status" value="1"/>
</dbReference>
<dbReference type="SUPFAM" id="SSF109998">
    <property type="entry name" value="Triger factor/SurA peptide-binding domain-like"/>
    <property type="match status" value="1"/>
</dbReference>
<dbReference type="PROSITE" id="PS01096">
    <property type="entry name" value="PPIC_PPIASE_1"/>
    <property type="match status" value="1"/>
</dbReference>
<dbReference type="PROSITE" id="PS50198">
    <property type="entry name" value="PPIC_PPIASE_2"/>
    <property type="match status" value="1"/>
</dbReference>
<dbReference type="PROSITE" id="PS51257">
    <property type="entry name" value="PROKAR_LIPOPROTEIN"/>
    <property type="match status" value="1"/>
</dbReference>
<feature type="signal peptide" evidence="1">
    <location>
        <begin position="1"/>
        <end position="19"/>
    </location>
</feature>
<feature type="chain" id="PRO_0000029299" description="Foldase protein PrsA">
    <location>
        <begin position="20"/>
        <end position="292"/>
    </location>
</feature>
<feature type="domain" description="PpiC">
    <location>
        <begin position="134"/>
        <end position="224"/>
    </location>
</feature>
<feature type="region of interest" description="Disordered" evidence="2">
    <location>
        <begin position="270"/>
        <end position="292"/>
    </location>
</feature>
<feature type="compositionally biased region" description="Low complexity" evidence="2">
    <location>
        <begin position="276"/>
        <end position="292"/>
    </location>
</feature>
<feature type="lipid moiety-binding region" description="N-palmitoyl cysteine" evidence="1">
    <location>
        <position position="20"/>
    </location>
</feature>
<feature type="lipid moiety-binding region" description="S-diacylglycerol cysteine" evidence="1">
    <location>
        <position position="20"/>
    </location>
</feature>
<feature type="mutagenesis site" description="Abolishes lipid modification of the protein." evidence="7">
    <original>C</original>
    <variation>Y</variation>
    <location>
        <position position="20"/>
    </location>
</feature>
<feature type="mutagenesis site" description="Loss of PPIase function. No effect on secretion of proteins and on growth." evidence="4">
    <original>H</original>
    <variation>A</variation>
    <location>
        <position position="141"/>
    </location>
</feature>
<feature type="mutagenesis site" description="No effect on secretion of proteins and on growth." evidence="4">
    <original>F</original>
    <variation>Y</variation>
    <location>
        <position position="163"/>
    </location>
</feature>
<feature type="mutagenesis site" description="No effect on secretion of proteins and on growth." evidence="4">
    <original>S</original>
    <variation>A</variation>
    <location>
        <position position="171"/>
    </location>
</feature>
<feature type="mutagenesis site" description="Decrease in PPIase activity. No effect on secretion of proteins and on growth." evidence="4">
    <original>D</original>
    <variation>A</variation>
    <location>
        <position position="173"/>
    </location>
</feature>
<feature type="mutagenesis site" description="No effect on secretion of proteins and on growth." evidence="4">
    <original>S</original>
    <variation>P</variation>
    <location>
        <position position="175"/>
    </location>
</feature>
<feature type="mutagenesis site" description="No effect on secretion of proteins and on growth." evidence="4">
    <original>G</original>
    <variation>A</variation>
    <location>
        <position position="180"/>
    </location>
</feature>
<feature type="mutagenesis site" description="No effect on secretion of proteins and on growth." evidence="4">
    <original>M</original>
    <variation>A</variation>
    <location>
        <position position="191"/>
    </location>
</feature>
<feature type="mutagenesis site" description="No effect on secretion of proteins and on growth." evidence="4">
    <original>F</original>
    <variation>A</variation>
    <variation>Y</variation>
    <location>
        <position position="195"/>
    </location>
</feature>
<feature type="mutagenesis site" description="No effect on secretion of proteins and on growth." evidence="4">
    <original>Y</original>
    <variation>A</variation>
    <location>
        <position position="215"/>
    </location>
</feature>
<feature type="mutagenesis site" description="Decreased secretion of proteins; no effect on growth." evidence="4">
    <original>G</original>
    <variation>A</variation>
    <location>
        <position position="216"/>
    </location>
</feature>
<feature type="mutagenesis site" description="Decreased secretion of proteins; no effect on growth." evidence="4">
    <original>H</original>
    <variation>A</variation>
    <location>
        <position position="218"/>
    </location>
</feature>
<feature type="mutagenesis site" description="No effect on secretion of proteins and on growth." evidence="4">
    <original>I</original>
    <variation>A</variation>
    <location>
        <position position="219"/>
    </location>
</feature>
<feature type="helix" evidence="9">
    <location>
        <begin position="23"/>
        <end position="25"/>
    </location>
</feature>
<feature type="strand" evidence="9">
    <location>
        <begin position="27"/>
        <end position="31"/>
    </location>
</feature>
<feature type="helix" evidence="9">
    <location>
        <begin position="38"/>
        <end position="66"/>
    </location>
</feature>
<feature type="helix" evidence="9">
    <location>
        <begin position="71"/>
        <end position="84"/>
    </location>
</feature>
<feature type="helix" evidence="9">
    <location>
        <begin position="88"/>
        <end position="95"/>
    </location>
</feature>
<feature type="helix" evidence="9">
    <location>
        <begin position="98"/>
        <end position="118"/>
    </location>
</feature>
<feature type="helix" evidence="9">
    <location>
        <begin position="123"/>
        <end position="130"/>
    </location>
</feature>
<feature type="strand" evidence="9">
    <location>
        <begin position="136"/>
        <end position="145"/>
    </location>
</feature>
<feature type="helix" evidence="9">
    <location>
        <begin position="147"/>
        <end position="159"/>
    </location>
</feature>
<feature type="helix" evidence="9">
    <location>
        <begin position="163"/>
        <end position="170"/>
    </location>
</feature>
<feature type="helix" evidence="9">
    <location>
        <begin position="174"/>
        <end position="176"/>
    </location>
</feature>
<feature type="turn" evidence="9">
    <location>
        <begin position="177"/>
        <end position="180"/>
    </location>
</feature>
<feature type="strand" evidence="9">
    <location>
        <begin position="181"/>
        <end position="191"/>
    </location>
</feature>
<feature type="helix" evidence="9">
    <location>
        <begin position="193"/>
        <end position="200"/>
    </location>
</feature>
<feature type="strand" evidence="9">
    <location>
        <begin position="217"/>
        <end position="224"/>
    </location>
</feature>
<feature type="turn" evidence="9">
    <location>
        <begin position="229"/>
        <end position="231"/>
    </location>
</feature>
<feature type="helix" evidence="9">
    <location>
        <begin position="233"/>
        <end position="245"/>
    </location>
</feature>
<feature type="helix" evidence="9">
    <location>
        <begin position="248"/>
        <end position="261"/>
    </location>
</feature>
<feature type="helix" evidence="9">
    <location>
        <begin position="269"/>
        <end position="271"/>
    </location>
</feature>
<feature type="turn" evidence="9">
    <location>
        <begin position="272"/>
        <end position="276"/>
    </location>
</feature>
<comment type="function">
    <text evidence="3">Essential protein that plays a major role in protein secretion by helping the post-translocational extracellular folding of several secreted proteins. Has PPIase activity but it is not essential for its function in vivo.</text>
</comment>
<comment type="catalytic activity">
    <reaction>
        <text>[protein]-peptidylproline (omega=180) = [protein]-peptidylproline (omega=0)</text>
        <dbReference type="Rhea" id="RHEA:16237"/>
        <dbReference type="Rhea" id="RHEA-COMP:10747"/>
        <dbReference type="Rhea" id="RHEA-COMP:10748"/>
        <dbReference type="ChEBI" id="CHEBI:83833"/>
        <dbReference type="ChEBI" id="CHEBI:83834"/>
        <dbReference type="EC" id="5.2.1.8"/>
    </reaction>
</comment>
<comment type="subcellular location">
    <subcellularLocation>
        <location evidence="5 6 8">Cell membrane</location>
        <topology evidence="8">Lipid-anchor</topology>
    </subcellularLocation>
    <subcellularLocation>
        <location evidence="5 6">Membrane raft</location>
        <topology evidence="8">Lipid-anchor</topology>
    </subcellularLocation>
    <text evidence="5 6">Present in detergent-resistant membrane (DRM) fractions that may be equivalent to eukaryotic membrane rafts; these rafts include proteins involved in signaling, molecule trafficking and protein secretion.</text>
</comment>
<comment type="domain">
    <text>All three domains (PPIase domain and the flanking N- and C-terminal domains) are essential for activity.</text>
</comment>
<comment type="similarity">
    <text evidence="8">Belongs to the PrsA family.</text>
</comment>
<comment type="sequence caution" evidence="8">
    <conflict type="miscellaneous discrepancy">
        <sequence resource="EMBL-CDS" id="AAA22825"/>
    </conflict>
    <text>Sequencing errors. The N-terminus of this sequence is probably the N-terminus of phrI.</text>
</comment>
<proteinExistence type="evidence at protein level"/>
<accession>P24327</accession>
<accession>Q45680</accession>
<evidence type="ECO:0000255" key="1"/>
<evidence type="ECO:0000256" key="2">
    <source>
        <dbReference type="SAM" id="MobiDB-lite"/>
    </source>
</evidence>
<evidence type="ECO:0000269" key="3">
    <source>
    </source>
</evidence>
<evidence type="ECO:0000269" key="4">
    <source>
    </source>
</evidence>
<evidence type="ECO:0000269" key="5">
    <source>
    </source>
</evidence>
<evidence type="ECO:0000269" key="6">
    <source>
    </source>
</evidence>
<evidence type="ECO:0000269" key="7">
    <source>
    </source>
</evidence>
<evidence type="ECO:0000305" key="8"/>
<evidence type="ECO:0007829" key="9">
    <source>
        <dbReference type="PDB" id="4WO7"/>
    </source>
</evidence>
<reference key="1">
    <citation type="journal article" date="1991" name="Mol. Microbiol.">
        <title>A gene (prsA) of Bacillus subtilis involved in a novel, late stage of protein export.</title>
        <authorList>
            <person name="Kontinen V.P."/>
            <person name="Saris P."/>
            <person name="Sarvas M."/>
        </authorList>
    </citation>
    <scope>NUCLEOTIDE SEQUENCE [GENOMIC DNA]</scope>
    <source>
        <strain>168</strain>
    </source>
</reference>
<reference key="2">
    <citation type="journal article" date="1998" name="Microbiology">
        <title>The 172 kb prkA-addAB region from 83 degrees to 97 degrees of the Bacillus subtilis chromosome contains several dysfunctional genes, the glyB marker, many genes encoding transporter proteins, and the ubiquitous hit gene.</title>
        <authorList>
            <person name="Noback M.A."/>
            <person name="Holsappel S."/>
            <person name="Kiewiet R."/>
            <person name="Terpstra P."/>
            <person name="Wambutt R."/>
            <person name="Wedler H."/>
            <person name="Venema G."/>
            <person name="Bron S."/>
        </authorList>
    </citation>
    <scope>NUCLEOTIDE SEQUENCE [GENOMIC DNA]</scope>
    <source>
        <strain>168</strain>
    </source>
</reference>
<reference key="3">
    <citation type="journal article" date="1997" name="Nature">
        <title>The complete genome sequence of the Gram-positive bacterium Bacillus subtilis.</title>
        <authorList>
            <person name="Kunst F."/>
            <person name="Ogasawara N."/>
            <person name="Moszer I."/>
            <person name="Albertini A.M."/>
            <person name="Alloni G."/>
            <person name="Azevedo V."/>
            <person name="Bertero M.G."/>
            <person name="Bessieres P."/>
            <person name="Bolotin A."/>
            <person name="Borchert S."/>
            <person name="Borriss R."/>
            <person name="Boursier L."/>
            <person name="Brans A."/>
            <person name="Braun M."/>
            <person name="Brignell S.C."/>
            <person name="Bron S."/>
            <person name="Brouillet S."/>
            <person name="Bruschi C.V."/>
            <person name="Caldwell B."/>
            <person name="Capuano V."/>
            <person name="Carter N.M."/>
            <person name="Choi S.-K."/>
            <person name="Codani J.-J."/>
            <person name="Connerton I.F."/>
            <person name="Cummings N.J."/>
            <person name="Daniel R.A."/>
            <person name="Denizot F."/>
            <person name="Devine K.M."/>
            <person name="Duesterhoeft A."/>
            <person name="Ehrlich S.D."/>
            <person name="Emmerson P.T."/>
            <person name="Entian K.-D."/>
            <person name="Errington J."/>
            <person name="Fabret C."/>
            <person name="Ferrari E."/>
            <person name="Foulger D."/>
            <person name="Fritz C."/>
            <person name="Fujita M."/>
            <person name="Fujita Y."/>
            <person name="Fuma S."/>
            <person name="Galizzi A."/>
            <person name="Galleron N."/>
            <person name="Ghim S.-Y."/>
            <person name="Glaser P."/>
            <person name="Goffeau A."/>
            <person name="Golightly E.J."/>
            <person name="Grandi G."/>
            <person name="Guiseppi G."/>
            <person name="Guy B.J."/>
            <person name="Haga K."/>
            <person name="Haiech J."/>
            <person name="Harwood C.R."/>
            <person name="Henaut A."/>
            <person name="Hilbert H."/>
            <person name="Holsappel S."/>
            <person name="Hosono S."/>
            <person name="Hullo M.-F."/>
            <person name="Itaya M."/>
            <person name="Jones L.-M."/>
            <person name="Joris B."/>
            <person name="Karamata D."/>
            <person name="Kasahara Y."/>
            <person name="Klaerr-Blanchard M."/>
            <person name="Klein C."/>
            <person name="Kobayashi Y."/>
            <person name="Koetter P."/>
            <person name="Koningstein G."/>
            <person name="Krogh S."/>
            <person name="Kumano M."/>
            <person name="Kurita K."/>
            <person name="Lapidus A."/>
            <person name="Lardinois S."/>
            <person name="Lauber J."/>
            <person name="Lazarevic V."/>
            <person name="Lee S.-M."/>
            <person name="Levine A."/>
            <person name="Liu H."/>
            <person name="Masuda S."/>
            <person name="Mauel C."/>
            <person name="Medigue C."/>
            <person name="Medina N."/>
            <person name="Mellado R.P."/>
            <person name="Mizuno M."/>
            <person name="Moestl D."/>
            <person name="Nakai S."/>
            <person name="Noback M."/>
            <person name="Noone D."/>
            <person name="O'Reilly M."/>
            <person name="Ogawa K."/>
            <person name="Ogiwara A."/>
            <person name="Oudega B."/>
            <person name="Park S.-H."/>
            <person name="Parro V."/>
            <person name="Pohl T.M."/>
            <person name="Portetelle D."/>
            <person name="Porwollik S."/>
            <person name="Prescott A.M."/>
            <person name="Presecan E."/>
            <person name="Pujic P."/>
            <person name="Purnelle B."/>
            <person name="Rapoport G."/>
            <person name="Rey M."/>
            <person name="Reynolds S."/>
            <person name="Rieger M."/>
            <person name="Rivolta C."/>
            <person name="Rocha E."/>
            <person name="Roche B."/>
            <person name="Rose M."/>
            <person name="Sadaie Y."/>
            <person name="Sato T."/>
            <person name="Scanlan E."/>
            <person name="Schleich S."/>
            <person name="Schroeter R."/>
            <person name="Scoffone F."/>
            <person name="Sekiguchi J."/>
            <person name="Sekowska A."/>
            <person name="Seror S.J."/>
            <person name="Serror P."/>
            <person name="Shin B.-S."/>
            <person name="Soldo B."/>
            <person name="Sorokin A."/>
            <person name="Tacconi E."/>
            <person name="Takagi T."/>
            <person name="Takahashi H."/>
            <person name="Takemaru K."/>
            <person name="Takeuchi M."/>
            <person name="Tamakoshi A."/>
            <person name="Tanaka T."/>
            <person name="Terpstra P."/>
            <person name="Tognoni A."/>
            <person name="Tosato V."/>
            <person name="Uchiyama S."/>
            <person name="Vandenbol M."/>
            <person name="Vannier F."/>
            <person name="Vassarotti A."/>
            <person name="Viari A."/>
            <person name="Wambutt R."/>
            <person name="Wedler E."/>
            <person name="Wedler H."/>
            <person name="Weitzenegger T."/>
            <person name="Winters P."/>
            <person name="Wipat A."/>
            <person name="Yamamoto H."/>
            <person name="Yamane K."/>
            <person name="Yasumoto K."/>
            <person name="Yata K."/>
            <person name="Yoshida K."/>
            <person name="Yoshikawa H.-F."/>
            <person name="Zumstein E."/>
            <person name="Yoshikawa H."/>
            <person name="Danchin A."/>
        </authorList>
    </citation>
    <scope>NUCLEOTIDE SEQUENCE [LARGE SCALE GENOMIC DNA]</scope>
    <source>
        <strain>168</strain>
    </source>
</reference>
<reference key="4">
    <citation type="journal article" date="1988" name="Gene">
        <title>Characterization of signal-sequence-coding regions selected from the Bacillus subtilis chromosome.</title>
        <authorList>
            <person name="Smith H."/>
            <person name="de Jong A."/>
            <person name="Bron S."/>
            <person name="Venema G."/>
        </authorList>
    </citation>
    <scope>NUCLEOTIDE SEQUENCE [GENOMIC DNA] OF 181-210</scope>
</reference>
<reference key="5">
    <citation type="journal article" date="2001" name="J. Bacteriol.">
        <title>Quantitation of the capacity of the secretion apparatus and requirement for PrsA in growth and secretion of alpha-amylase in Bacillus subtilis.</title>
        <authorList>
            <person name="Vitikainen M."/>
            <person name="Pummi T."/>
            <person name="Airaksinen U."/>
            <person name="Wahlstroem E."/>
            <person name="Wu H."/>
            <person name="Sarvas M."/>
            <person name="Kontinen V.P."/>
        </authorList>
    </citation>
    <scope>CHARACTERIZATION</scope>
    <source>
        <strain>168</strain>
    </source>
</reference>
<reference key="6">
    <citation type="journal article" date="2003" name="Microbiology">
        <title>The extracytoplasmic folding factor PrsA is required for protein secretion only in the presence of the cell wall in Bacillus subtilis.</title>
        <authorList>
            <person name="Wahlstroem E."/>
            <person name="Vitikainen M."/>
            <person name="Kontinen V.P."/>
            <person name="Sarvas M."/>
        </authorList>
    </citation>
    <scope>FUNCTION</scope>
    <scope>INTERACTION WITH THE CELL WALL</scope>
    <source>
        <strain>168</strain>
    </source>
</reference>
<reference key="7">
    <citation type="journal article" date="2004" name="J. Biol. Chem.">
        <title>Structure-function analysis of PrsA reveals roles for the parvulin-like and flanking N- and C-terminal domains in protein folding and secretion in Bacillus subtilis.</title>
        <authorList>
            <person name="Vitikainen M."/>
            <person name="Lappalainen I."/>
            <person name="Seppala R."/>
            <person name="Antelmann H."/>
            <person name="Boer H."/>
            <person name="Taira S."/>
            <person name="Savilahti H."/>
            <person name="Hecker M."/>
            <person name="Vihinen M."/>
            <person name="Sarvas M."/>
            <person name="Kontinen V.P."/>
        </authorList>
    </citation>
    <scope>CHARACTERIZATION</scope>
    <scope>MUTAGENESIS OF HIS-141; PHE-163; SER-171; ASP-173; SER-175; GLY-180; MET-191; PHE-195; TYR-215; GLY-216; HIS-218 AND ILE-219</scope>
    <source>
        <strain>168</strain>
    </source>
</reference>
<reference key="8">
    <citation type="journal article" date="1988" name="J. Gen. Microbiol.">
        <title>Mutants of Bacillus subtilis defective in protein export.</title>
        <authorList>
            <person name="Kontinen V.P."/>
            <person name="Sarvas M."/>
        </authorList>
    </citation>
    <scope>MUTAGENESIS OF CYS-20</scope>
</reference>
<reference key="9">
    <citation type="journal article" date="2010" name="Genes Dev.">
        <title>Functional microdomains in bacterial membranes.</title>
        <authorList>
            <person name="Lopez D."/>
            <person name="Kolter R."/>
        </authorList>
    </citation>
    <scope>SUBCELLULAR LOCATION</scope>
    <source>
        <strain>168 / Marburg / ATCC 6051 / DSM 10 / JCM 1465 / NBRC 13719 / NCIMB 3610 / NRRL NRS-744 / VKM B-501</strain>
    </source>
</reference>
<reference key="10">
    <citation type="journal article" date="2012" name="Mol. Microbiol.">
        <title>The biofilm formation defect of a Bacillus subtilis flotillin-defective mutant involves the protease FtsH.</title>
        <authorList>
            <person name="Yepes A."/>
            <person name="Schneider J."/>
            <person name="Mielich B."/>
            <person name="Koch G."/>
            <person name="Garcia-Betancur J.C."/>
            <person name="Ramamurthi K.S."/>
            <person name="Vlamakis H."/>
            <person name="Lopez D."/>
        </authorList>
    </citation>
    <scope>SUBCELLULAR LOCATION</scope>
    <source>
        <strain>168 / Marburg / ATCC 6051 / DSM 10 / JCM 1465 / NBRC 13719 / NCIMB 3610 / NRRL NRS-744 / VKM B-501</strain>
    </source>
</reference>
<keyword id="KW-0002">3D-structure</keyword>
<keyword id="KW-1003">Cell membrane</keyword>
<keyword id="KW-0413">Isomerase</keyword>
<keyword id="KW-0449">Lipoprotein</keyword>
<keyword id="KW-0472">Membrane</keyword>
<keyword id="KW-0564">Palmitate</keyword>
<keyword id="KW-1185">Reference proteome</keyword>
<keyword id="KW-0697">Rotamase</keyword>
<keyword id="KW-0732">Signal</keyword>
<gene>
    <name type="primary">prsA</name>
    <name type="ordered locus">BSU09950</name>
</gene>
<name>PRSA_BACSU</name>
<sequence>MKKIAIAAITATSILALSACSSGDKEVIAKTDAGDVTKGELYTNMKKTAGASVLTQLVQEKVLDKKYKVSDKEIDNKLKEYKTQLGDQYTALEKQYGKDYLKEQVKYELLTQKAAKDNIKVTDADIKEYWEGLKGKIRASHILVADKKTAEEVEKKLKKGEKFEDLAKEYSTDSSASKGGDLGWFAKEGQMDETFSKAAFKLKTGEVSDPVKTQYGYHIIKKTEERGKYDDMKKELKSEVLEQKLNDNAAVQEAVQKVMKKADIEVKDKDLKDTFNTSSTSNSTSSSSSNSK</sequence>